<feature type="chain" id="PRO_0000161845" description="Nickel-cobalt-cadmium resistance protein NccA">
    <location>
        <begin position="1"/>
        <end position="1076"/>
    </location>
</feature>
<feature type="transmembrane region" description="Helical" evidence="1">
    <location>
        <begin position="14"/>
        <end position="34"/>
    </location>
</feature>
<feature type="transmembrane region" description="Helical" evidence="1">
    <location>
        <begin position="367"/>
        <end position="387"/>
    </location>
</feature>
<feature type="transmembrane region" description="Helical" evidence="1">
    <location>
        <begin position="391"/>
        <end position="411"/>
    </location>
</feature>
<feature type="transmembrane region" description="Helical" evidence="1">
    <location>
        <begin position="419"/>
        <end position="439"/>
    </location>
</feature>
<feature type="transmembrane region" description="Helical" evidence="1">
    <location>
        <begin position="476"/>
        <end position="496"/>
    </location>
</feature>
<feature type="transmembrane region" description="Helical" evidence="1">
    <location>
        <begin position="503"/>
        <end position="523"/>
    </location>
</feature>
<feature type="transmembrane region" description="Helical" evidence="1">
    <location>
        <begin position="562"/>
        <end position="582"/>
    </location>
</feature>
<feature type="transmembrane region" description="Helical" evidence="1">
    <location>
        <begin position="904"/>
        <end position="924"/>
    </location>
</feature>
<feature type="transmembrane region" description="Helical" evidence="1">
    <location>
        <begin position="929"/>
        <end position="949"/>
    </location>
</feature>
<feature type="transmembrane region" description="Helical" evidence="1">
    <location>
        <begin position="960"/>
        <end position="980"/>
    </location>
</feature>
<feature type="transmembrane region" description="Helical" evidence="1">
    <location>
        <begin position="1004"/>
        <end position="1024"/>
    </location>
</feature>
<feature type="transmembrane region" description="Helical" evidence="1">
    <location>
        <begin position="1036"/>
        <end position="1056"/>
    </location>
</feature>
<protein>
    <recommendedName>
        <fullName>Nickel-cobalt-cadmium resistance protein NccA</fullName>
    </recommendedName>
</protein>
<evidence type="ECO:0000255" key="1"/>
<evidence type="ECO:0000305" key="2"/>
<dbReference type="EMBL" id="L31363">
    <property type="protein sequence ID" value="AAA65106.1"/>
    <property type="molecule type" value="Genomic_DNA"/>
</dbReference>
<dbReference type="PIR" id="I39580">
    <property type="entry name" value="I39580"/>
</dbReference>
<dbReference type="SMR" id="Q44586"/>
<dbReference type="TCDB" id="2.A.6.1.12">
    <property type="family name" value="the resistance-nodulation-cell division (rnd) superfamily"/>
</dbReference>
<dbReference type="GO" id="GO:0005886">
    <property type="term" value="C:plasma membrane"/>
    <property type="evidence" value="ECO:0007669"/>
    <property type="project" value="UniProtKB-SubCell"/>
</dbReference>
<dbReference type="GO" id="GO:0008324">
    <property type="term" value="F:monoatomic cation transmembrane transporter activity"/>
    <property type="evidence" value="ECO:0007669"/>
    <property type="project" value="InterPro"/>
</dbReference>
<dbReference type="GO" id="GO:0042910">
    <property type="term" value="F:xenobiotic transmembrane transporter activity"/>
    <property type="evidence" value="ECO:0007669"/>
    <property type="project" value="TreeGrafter"/>
</dbReference>
<dbReference type="GO" id="GO:0046686">
    <property type="term" value="P:response to cadmium ion"/>
    <property type="evidence" value="ECO:0007669"/>
    <property type="project" value="UniProtKB-KW"/>
</dbReference>
<dbReference type="Gene3D" id="3.30.70.1430">
    <property type="entry name" value="Multidrug efflux transporter AcrB pore domain"/>
    <property type="match status" value="2"/>
</dbReference>
<dbReference type="Gene3D" id="3.30.70.1440">
    <property type="entry name" value="Multidrug efflux transporter AcrB pore domain"/>
    <property type="match status" value="1"/>
</dbReference>
<dbReference type="Gene3D" id="3.30.70.1320">
    <property type="entry name" value="Multidrug efflux transporter AcrB pore domain like"/>
    <property type="match status" value="1"/>
</dbReference>
<dbReference type="Gene3D" id="3.30.2090.10">
    <property type="entry name" value="Multidrug efflux transporter AcrB TolC docking domain, DN and DC subdomains"/>
    <property type="match status" value="2"/>
</dbReference>
<dbReference type="Gene3D" id="1.20.1640.10">
    <property type="entry name" value="Multidrug efflux transporter AcrB transmembrane domain"/>
    <property type="match status" value="2"/>
</dbReference>
<dbReference type="InterPro" id="IPR027463">
    <property type="entry name" value="AcrB_DN_DC_subdom"/>
</dbReference>
<dbReference type="InterPro" id="IPR001036">
    <property type="entry name" value="Acrflvin-R"/>
</dbReference>
<dbReference type="InterPro" id="IPR004763">
    <property type="entry name" value="CusA-like"/>
</dbReference>
<dbReference type="NCBIfam" id="TIGR00914">
    <property type="entry name" value="2A0601"/>
    <property type="match status" value="1"/>
</dbReference>
<dbReference type="PANTHER" id="PTHR32063">
    <property type="match status" value="1"/>
</dbReference>
<dbReference type="PANTHER" id="PTHR32063:SF24">
    <property type="entry name" value="CATION EFFLUX SYSTEM (ACRB_ACRD_ACRF FAMILY)"/>
    <property type="match status" value="1"/>
</dbReference>
<dbReference type="Pfam" id="PF00873">
    <property type="entry name" value="ACR_tran"/>
    <property type="match status" value="1"/>
</dbReference>
<dbReference type="PRINTS" id="PR00702">
    <property type="entry name" value="ACRIFLAVINRP"/>
</dbReference>
<dbReference type="SUPFAM" id="SSF82693">
    <property type="entry name" value="Multidrug efflux transporter AcrB pore domain, PN1, PN2, PC1 and PC2 subdomains"/>
    <property type="match status" value="1"/>
</dbReference>
<dbReference type="SUPFAM" id="SSF82714">
    <property type="entry name" value="Multidrug efflux transporter AcrB TolC docking domain, DN and DC subdomains"/>
    <property type="match status" value="2"/>
</dbReference>
<dbReference type="SUPFAM" id="SSF82866">
    <property type="entry name" value="Multidrug efflux transporter AcrB transmembrane domain"/>
    <property type="match status" value="2"/>
</dbReference>
<accession>Q44586</accession>
<proteinExistence type="inferred from homology"/>
<keyword id="KW-0104">Cadmium</keyword>
<keyword id="KW-0105">Cadmium resistance</keyword>
<keyword id="KW-1003">Cell membrane</keyword>
<keyword id="KW-0170">Cobalt</keyword>
<keyword id="KW-0472">Membrane</keyword>
<keyword id="KW-0533">Nickel</keyword>
<keyword id="KW-0614">Plasmid</keyword>
<keyword id="KW-0812">Transmembrane</keyword>
<keyword id="KW-1133">Transmembrane helix</keyword>
<keyword id="KW-0813">Transport</keyword>
<sequence>MIESILSGAVRFRWLVLFLTAVVGAIGAWQLNLLPIDVTPDITNKQVQINTVVPTLSPVEVEKRVTYPIETAIAGLNGVENMRSLSRNGFSQVTVIFKESSNLYFMRQQVTERLAQARPNLPAGVEPQMGPVSTGLGEVFHYSVEYEFPDGKGAKVKDGEPGWQSDGSFLTERGERLTDRVSKLAYLRTVQDWIIRPQLRTTAGVADVDSLGGYVKQFVVEPDAAKMAAYGISFEELAQALEDANLSVGANFIRRSGESYLVRADARIKSADEIARAVIAQRQGVPITVGQVANINVGGELRSGAASRNGYETVVGSALMLVGANSRTVAQAVGDKLEEIKKTLPPGVVIVPTLNRSQLVMATIKTVAKNLVEGAALVVVILFALLGNWRAAVIAALVIPLSLLISAIGMNGLNISGNLMSLGALDFGLIIDGAVIIVENSLRRLAERQHHEGRLLTLKERLEEVILSSREMVRPTVYGQLVIFMVFLPCLTFQGVEGKMFSPMVITLMLALASAFVLSLTFVPAMVAVLLRKKVSEKEVRVIAVTKERYRPLLERAVARPMPFLGAALVTLALAAMAFTFVGREFMPTLDEQNLNLSSVRIPSTSIDQSVAIDLPLERAVLSLPEVQTVYSKAGTASLAADPMPPNASDNYIILKPKSEWPEGITTKEQVIERIREKTAPMVSNNYDVTQPIQMRFNELIGGVRSDVAVKIYGENLDDLASTAQKIAAVLRKTPGATDTRVPLTGGFPTFDIVFDRAAIARYGLTVKEVADTVAAAMAGRPSGQIFDGDRRYDIVIRLPGQQRENLDVLGALPVMLPAVEGQPRASVPLRQLVQFRFTQGLNEVSRDNGKRRVYVEANVGGRDLGSFVDDAAKRIAAEVKLPPGMYIEWGGQFQNLQAATQRLAIIVPLCFILIAATLYMAIGSAALTATVLTAVPLALAGGVFALVLRDIPFSISASVGFIAVSGVAVLNGLVLISAIRKRLEDGAAPNEAVIEGAMERVRPVLMTALVASLGFVPMAIATGTGAEVQKPLATVVIGGLITATVLTLFVLPAVCGMVLRRQKKLEKPGGELLEA</sequence>
<name>NCCA_ALCXX</name>
<organism>
    <name type="scientific">Alcaligenes xylosoxydans xylosoxydans</name>
    <name type="common">Achromobacter xylosoxidans</name>
    <dbReference type="NCBI Taxonomy" id="85698"/>
    <lineage>
        <taxon>Bacteria</taxon>
        <taxon>Pseudomonadati</taxon>
        <taxon>Pseudomonadota</taxon>
        <taxon>Betaproteobacteria</taxon>
        <taxon>Burkholderiales</taxon>
        <taxon>Alcaligenaceae</taxon>
        <taxon>Achromobacter</taxon>
    </lineage>
</organism>
<geneLocation type="plasmid">
    <name>pTOM9</name>
</geneLocation>
<comment type="function">
    <text>Component of the NCC cation-efflux system that confers resistance to nickel, cobalt and cadmium. May form a membrane tunnel, which allows ion transport across the membrane.</text>
</comment>
<comment type="subcellular location">
    <subcellularLocation>
        <location evidence="2">Cell membrane</location>
        <topology evidence="2">Multi-pass membrane protein</topology>
    </subcellularLocation>
</comment>
<comment type="similarity">
    <text evidence="2">Belongs to the resistance-nodulation-cell division (RND) (TC 2.A.6) family.</text>
</comment>
<reference key="1">
    <citation type="journal article" date="1994" name="J. Bacteriol.">
        <title>Combined nickel-cobalt-cadmium resistance encoded by the ncc locus of Alcaligenes xylosoxidans 31A.</title>
        <authorList>
            <person name="Schmidt T."/>
            <person name="Schlegel H.G."/>
        </authorList>
    </citation>
    <scope>NUCLEOTIDE SEQUENCE [GENOMIC DNA]</scope>
    <source>
        <strain>31A</strain>
    </source>
</reference>
<gene>
    <name type="primary">nccA</name>
</gene>